<sequence>MTKVCPEIEGTLSLSVVPVSVDVSFASDHFPTYKLGPDNQIVEEPKEDEKGPSVKETVEKESELLSDQHKRLSVRDLASKFDKNLAAAVSLANEAKLREVASLEGHVMLKKLRDALEYMRGRTDGQNKQDVETAISMVEALAVKLTQNEGELIQEKFEVKKLGNFLKQTSEDAKKLVNQEKSFSCAEIETARAVVLRLGEAFEEQERISEASRAQGPDVEKLVEEVQEARQIKRMHHPTKVMGMQHELHGLRNRIQEKYMNSVKLHKEIAIIKRVEESKSCPFVLEGKQSLGSCLRIRVNAQDNAPDLSNCSIQWYRAACETSRREAISGAIQSMYAPEPFDVGRILQADILSNGQKFTVTTDDPVDPDSGLPSRVESLMRKSNSEFSVVISQMNGQDYASRSHVFTVGKTRIKLSRGWITKARELYSTSMQLCGVRGNIKAPTKAVFWQPRKSLTFILTFESEHERNAAIALARKYAFDCSVTLLGPDD</sequence>
<name>SCAB3_ARATH</name>
<keyword id="KW-0009">Actin-binding</keyword>
<keyword id="KW-0963">Cytoplasm</keyword>
<keyword id="KW-0206">Cytoskeleton</keyword>
<keyword id="KW-1185">Reference proteome</keyword>
<feature type="chain" id="PRO_0000431809" description="Stomatal closure-related actin-binding protein 3">
    <location>
        <begin position="1"/>
        <end position="490"/>
    </location>
</feature>
<dbReference type="EMBL" id="AL163972">
    <property type="protein sequence ID" value="CAB88051.1"/>
    <property type="status" value="ALT_SEQ"/>
    <property type="molecule type" value="Genomic_DNA"/>
</dbReference>
<dbReference type="EMBL" id="CP002686">
    <property type="protein sequence ID" value="AEE79526.1"/>
    <property type="molecule type" value="Genomic_DNA"/>
</dbReference>
<dbReference type="EMBL" id="BT005893">
    <property type="protein sequence ID" value="AAO64828.1"/>
    <property type="molecule type" value="mRNA"/>
</dbReference>
<dbReference type="EMBL" id="AK118517">
    <property type="protein sequence ID" value="BAC43120.1"/>
    <property type="molecule type" value="mRNA"/>
</dbReference>
<dbReference type="PIR" id="T49049">
    <property type="entry name" value="T49049"/>
</dbReference>
<dbReference type="RefSeq" id="NP_191207.2">
    <property type="nucleotide sequence ID" value="NM_115506.3"/>
</dbReference>
<dbReference type="SMR" id="Q8GX05"/>
<dbReference type="FunCoup" id="Q8GX05">
    <property type="interactions" value="191"/>
</dbReference>
<dbReference type="iPTMnet" id="Q8GX05"/>
<dbReference type="PaxDb" id="3702-AT3G56480.1"/>
<dbReference type="ProteomicsDB" id="232738"/>
<dbReference type="EnsemblPlants" id="AT3G56480.1">
    <property type="protein sequence ID" value="AT3G56480.1"/>
    <property type="gene ID" value="AT3G56480"/>
</dbReference>
<dbReference type="GeneID" id="824815"/>
<dbReference type="Gramene" id="AT3G56480.1">
    <property type="protein sequence ID" value="AT3G56480.1"/>
    <property type="gene ID" value="AT3G56480"/>
</dbReference>
<dbReference type="KEGG" id="ath:AT3G56480"/>
<dbReference type="Araport" id="AT3G56480"/>
<dbReference type="TAIR" id="AT3G56480">
    <property type="gene designation" value="SCAB3"/>
</dbReference>
<dbReference type="eggNOG" id="ENOG502QRDW">
    <property type="taxonomic scope" value="Eukaryota"/>
</dbReference>
<dbReference type="HOGENOM" id="CLU_026412_2_0_1"/>
<dbReference type="InParanoid" id="Q8GX05"/>
<dbReference type="OMA" id="WMAFAYL"/>
<dbReference type="OrthoDB" id="2014217at2759"/>
<dbReference type="PhylomeDB" id="Q8GX05"/>
<dbReference type="PRO" id="PR:Q8GX05"/>
<dbReference type="Proteomes" id="UP000006548">
    <property type="component" value="Chromosome 3"/>
</dbReference>
<dbReference type="ExpressionAtlas" id="Q8GX05">
    <property type="expression patterns" value="baseline and differential"/>
</dbReference>
<dbReference type="GO" id="GO:0005737">
    <property type="term" value="C:cytoplasm"/>
    <property type="evidence" value="ECO:0007669"/>
    <property type="project" value="UniProtKB-KW"/>
</dbReference>
<dbReference type="GO" id="GO:0005856">
    <property type="term" value="C:cytoskeleton"/>
    <property type="evidence" value="ECO:0007669"/>
    <property type="project" value="UniProtKB-SubCell"/>
</dbReference>
<dbReference type="GO" id="GO:0003779">
    <property type="term" value="F:actin binding"/>
    <property type="evidence" value="ECO:0007669"/>
    <property type="project" value="UniProtKB-KW"/>
</dbReference>
<dbReference type="GO" id="GO:0007015">
    <property type="term" value="P:actin filament organization"/>
    <property type="evidence" value="ECO:0007669"/>
    <property type="project" value="InterPro"/>
</dbReference>
<dbReference type="GO" id="GO:0007623">
    <property type="term" value="P:circadian rhythm"/>
    <property type="evidence" value="ECO:0000270"/>
    <property type="project" value="TAIR"/>
</dbReference>
<dbReference type="GO" id="GO:0010119">
    <property type="term" value="P:regulation of stomatal movement"/>
    <property type="evidence" value="ECO:0007669"/>
    <property type="project" value="InterPro"/>
</dbReference>
<dbReference type="FunFam" id="2.60.40.2700:FF:000004">
    <property type="entry name" value="Stomatal closure actin-binding-like protein"/>
    <property type="match status" value="1"/>
</dbReference>
<dbReference type="FunFam" id="2.30.29.140:FF:000001">
    <property type="entry name" value="Stomatal closure-related actin-binding protein 1"/>
    <property type="match status" value="1"/>
</dbReference>
<dbReference type="Gene3D" id="2.30.29.140">
    <property type="match status" value="1"/>
</dbReference>
<dbReference type="Gene3D" id="2.60.40.2700">
    <property type="match status" value="1"/>
</dbReference>
<dbReference type="Gene3D" id="1.20.5.440">
    <property type="entry name" value="ATP synthase delta/epsilon subunit, C-terminal domain"/>
    <property type="match status" value="1"/>
</dbReference>
<dbReference type="InterPro" id="IPR039640">
    <property type="entry name" value="SCAB"/>
</dbReference>
<dbReference type="InterPro" id="IPR032012">
    <property type="entry name" value="SCAB-ABD"/>
</dbReference>
<dbReference type="InterPro" id="IPR032015">
    <property type="entry name" value="SCAB-Ig"/>
</dbReference>
<dbReference type="InterPro" id="IPR041144">
    <property type="entry name" value="SCAB-PH"/>
</dbReference>
<dbReference type="InterPro" id="IPR032009">
    <property type="entry name" value="SCAB_CC"/>
</dbReference>
<dbReference type="PANTHER" id="PTHR31172">
    <property type="entry name" value="STOMATAL CLOSURE-RELATED ACTIN-BINDING PROTEIN 1"/>
    <property type="match status" value="1"/>
</dbReference>
<dbReference type="PANTHER" id="PTHR31172:SF7">
    <property type="entry name" value="STOMATAL CLOSURE-RELATED ACTIN-BINDING PROTEIN 3"/>
    <property type="match status" value="1"/>
</dbReference>
<dbReference type="Pfam" id="PF16711">
    <property type="entry name" value="SCAB-ABD"/>
    <property type="match status" value="1"/>
</dbReference>
<dbReference type="Pfam" id="PF16709">
    <property type="entry name" value="SCAB-Ig"/>
    <property type="match status" value="1"/>
</dbReference>
<dbReference type="Pfam" id="PF17684">
    <property type="entry name" value="SCAB-PH"/>
    <property type="match status" value="1"/>
</dbReference>
<dbReference type="Pfam" id="PF16712">
    <property type="entry name" value="SCAB_CC"/>
    <property type="match status" value="1"/>
</dbReference>
<gene>
    <name evidence="2" type="primary">SCAB3</name>
    <name evidence="4" type="ordered locus">At3g56480</name>
    <name evidence="6" type="ORF">T5P19.130</name>
</gene>
<accession>Q8GX05</accession>
<accession>Q9LXZ2</accession>
<organism evidence="5">
    <name type="scientific">Arabidopsis thaliana</name>
    <name type="common">Mouse-ear cress</name>
    <dbReference type="NCBI Taxonomy" id="3702"/>
    <lineage>
        <taxon>Eukaryota</taxon>
        <taxon>Viridiplantae</taxon>
        <taxon>Streptophyta</taxon>
        <taxon>Embryophyta</taxon>
        <taxon>Tracheophyta</taxon>
        <taxon>Spermatophyta</taxon>
        <taxon>Magnoliopsida</taxon>
        <taxon>eudicotyledons</taxon>
        <taxon>Gunneridae</taxon>
        <taxon>Pentapetalae</taxon>
        <taxon>rosids</taxon>
        <taxon>malvids</taxon>
        <taxon>Brassicales</taxon>
        <taxon>Brassicaceae</taxon>
        <taxon>Camelineae</taxon>
        <taxon>Arabidopsis</taxon>
    </lineage>
</organism>
<comment type="function">
    <text evidence="2">Probable plant-specific actin binding protein that bundles and stabilizes microfilaments (MFs).</text>
</comment>
<comment type="subcellular location">
    <subcellularLocation>
        <location evidence="1">Cytoplasm</location>
        <location evidence="1">Cytoskeleton</location>
    </subcellularLocation>
</comment>
<comment type="tissue specificity">
    <text evidence="2">Expressed in roots, stems, leaves, siliques and flowers.</text>
</comment>
<comment type="similarity">
    <text evidence="3">Belongs to the SCAB family.</text>
</comment>
<comment type="sequence caution" evidence="3">
    <conflict type="erroneous gene model prediction">
        <sequence resource="EMBL-CDS" id="CAB88051"/>
    </conflict>
</comment>
<protein>
    <recommendedName>
        <fullName evidence="2">Stomatal closure-related actin-binding protein 3</fullName>
    </recommendedName>
</protein>
<proteinExistence type="evidence at transcript level"/>
<evidence type="ECO:0000250" key="1">
    <source>
        <dbReference type="UniProtKB" id="O48791"/>
    </source>
</evidence>
<evidence type="ECO:0000303" key="2">
    <source>
    </source>
</evidence>
<evidence type="ECO:0000305" key="3"/>
<evidence type="ECO:0000312" key="4">
    <source>
        <dbReference type="Araport" id="AT3G56480"/>
    </source>
</evidence>
<evidence type="ECO:0000312" key="5">
    <source>
        <dbReference type="EMBL" id="BAC43120.1"/>
    </source>
</evidence>
<evidence type="ECO:0000312" key="6">
    <source>
        <dbReference type="EMBL" id="CAB88051.1"/>
    </source>
</evidence>
<reference key="1">
    <citation type="journal article" date="2000" name="Nature">
        <title>Sequence and analysis of chromosome 3 of the plant Arabidopsis thaliana.</title>
        <authorList>
            <person name="Salanoubat M."/>
            <person name="Lemcke K."/>
            <person name="Rieger M."/>
            <person name="Ansorge W."/>
            <person name="Unseld M."/>
            <person name="Fartmann B."/>
            <person name="Valle G."/>
            <person name="Bloecker H."/>
            <person name="Perez-Alonso M."/>
            <person name="Obermaier B."/>
            <person name="Delseny M."/>
            <person name="Boutry M."/>
            <person name="Grivell L.A."/>
            <person name="Mache R."/>
            <person name="Puigdomenech P."/>
            <person name="De Simone V."/>
            <person name="Choisne N."/>
            <person name="Artiguenave F."/>
            <person name="Robert C."/>
            <person name="Brottier P."/>
            <person name="Wincker P."/>
            <person name="Cattolico L."/>
            <person name="Weissenbach J."/>
            <person name="Saurin W."/>
            <person name="Quetier F."/>
            <person name="Schaefer M."/>
            <person name="Mueller-Auer S."/>
            <person name="Gabel C."/>
            <person name="Fuchs M."/>
            <person name="Benes V."/>
            <person name="Wurmbach E."/>
            <person name="Drzonek H."/>
            <person name="Erfle H."/>
            <person name="Jordan N."/>
            <person name="Bangert S."/>
            <person name="Wiedelmann R."/>
            <person name="Kranz H."/>
            <person name="Voss H."/>
            <person name="Holland R."/>
            <person name="Brandt P."/>
            <person name="Nyakatura G."/>
            <person name="Vezzi A."/>
            <person name="D'Angelo M."/>
            <person name="Pallavicini A."/>
            <person name="Toppo S."/>
            <person name="Simionati B."/>
            <person name="Conrad A."/>
            <person name="Hornischer K."/>
            <person name="Kauer G."/>
            <person name="Loehnert T.-H."/>
            <person name="Nordsiek G."/>
            <person name="Reichelt J."/>
            <person name="Scharfe M."/>
            <person name="Schoen O."/>
            <person name="Bargues M."/>
            <person name="Terol J."/>
            <person name="Climent J."/>
            <person name="Navarro P."/>
            <person name="Collado C."/>
            <person name="Perez-Perez A."/>
            <person name="Ottenwaelder B."/>
            <person name="Duchemin D."/>
            <person name="Cooke R."/>
            <person name="Laudie M."/>
            <person name="Berger-Llauro C."/>
            <person name="Purnelle B."/>
            <person name="Masuy D."/>
            <person name="de Haan M."/>
            <person name="Maarse A.C."/>
            <person name="Alcaraz J.-P."/>
            <person name="Cottet A."/>
            <person name="Casacuberta E."/>
            <person name="Monfort A."/>
            <person name="Argiriou A."/>
            <person name="Flores M."/>
            <person name="Liguori R."/>
            <person name="Vitale D."/>
            <person name="Mannhaupt G."/>
            <person name="Haase D."/>
            <person name="Schoof H."/>
            <person name="Rudd S."/>
            <person name="Zaccaria P."/>
            <person name="Mewes H.-W."/>
            <person name="Mayer K.F.X."/>
            <person name="Kaul S."/>
            <person name="Town C.D."/>
            <person name="Koo H.L."/>
            <person name="Tallon L.J."/>
            <person name="Jenkins J."/>
            <person name="Rooney T."/>
            <person name="Rizzo M."/>
            <person name="Walts A."/>
            <person name="Utterback T."/>
            <person name="Fujii C.Y."/>
            <person name="Shea T.P."/>
            <person name="Creasy T.H."/>
            <person name="Haas B."/>
            <person name="Maiti R."/>
            <person name="Wu D."/>
            <person name="Peterson J."/>
            <person name="Van Aken S."/>
            <person name="Pai G."/>
            <person name="Militscher J."/>
            <person name="Sellers P."/>
            <person name="Gill J.E."/>
            <person name="Feldblyum T.V."/>
            <person name="Preuss D."/>
            <person name="Lin X."/>
            <person name="Nierman W.C."/>
            <person name="Salzberg S.L."/>
            <person name="White O."/>
            <person name="Venter J.C."/>
            <person name="Fraser C.M."/>
            <person name="Kaneko T."/>
            <person name="Nakamura Y."/>
            <person name="Sato S."/>
            <person name="Kato T."/>
            <person name="Asamizu E."/>
            <person name="Sasamoto S."/>
            <person name="Kimura T."/>
            <person name="Idesawa K."/>
            <person name="Kawashima K."/>
            <person name="Kishida Y."/>
            <person name="Kiyokawa C."/>
            <person name="Kohara M."/>
            <person name="Matsumoto M."/>
            <person name="Matsuno A."/>
            <person name="Muraki A."/>
            <person name="Nakayama S."/>
            <person name="Nakazaki N."/>
            <person name="Shinpo S."/>
            <person name="Takeuchi C."/>
            <person name="Wada T."/>
            <person name="Watanabe A."/>
            <person name="Yamada M."/>
            <person name="Yasuda M."/>
            <person name="Tabata S."/>
        </authorList>
    </citation>
    <scope>NUCLEOTIDE SEQUENCE [LARGE SCALE GENOMIC DNA]</scope>
    <source>
        <strain>cv. Columbia</strain>
    </source>
</reference>
<reference key="2">
    <citation type="journal article" date="2017" name="Plant J.">
        <title>Araport11: a complete reannotation of the Arabidopsis thaliana reference genome.</title>
        <authorList>
            <person name="Cheng C.Y."/>
            <person name="Krishnakumar V."/>
            <person name="Chan A.P."/>
            <person name="Thibaud-Nissen F."/>
            <person name="Schobel S."/>
            <person name="Town C.D."/>
        </authorList>
    </citation>
    <scope>GENOME REANNOTATION</scope>
    <source>
        <strain>cv. Columbia</strain>
    </source>
</reference>
<reference key="3">
    <citation type="journal article" date="2002" name="Science">
        <title>Functional annotation of a full-length Arabidopsis cDNA collection.</title>
        <authorList>
            <person name="Seki M."/>
            <person name="Narusaka M."/>
            <person name="Kamiya A."/>
            <person name="Ishida J."/>
            <person name="Satou M."/>
            <person name="Sakurai T."/>
            <person name="Nakajima M."/>
            <person name="Enju A."/>
            <person name="Akiyama K."/>
            <person name="Oono Y."/>
            <person name="Muramatsu M."/>
            <person name="Hayashizaki Y."/>
            <person name="Kawai J."/>
            <person name="Carninci P."/>
            <person name="Itoh M."/>
            <person name="Ishii Y."/>
            <person name="Arakawa T."/>
            <person name="Shibata K."/>
            <person name="Shinagawa A."/>
            <person name="Shinozaki K."/>
        </authorList>
    </citation>
    <scope>NUCLEOTIDE SEQUENCE [LARGE SCALE MRNA]</scope>
    <source>
        <strain>cv. Columbia</strain>
    </source>
</reference>
<reference key="4">
    <citation type="journal article" date="2003" name="Science">
        <title>Empirical analysis of transcriptional activity in the Arabidopsis genome.</title>
        <authorList>
            <person name="Yamada K."/>
            <person name="Lim J."/>
            <person name="Dale J.M."/>
            <person name="Chen H."/>
            <person name="Shinn P."/>
            <person name="Palm C.J."/>
            <person name="Southwick A.M."/>
            <person name="Wu H.C."/>
            <person name="Kim C.J."/>
            <person name="Nguyen M."/>
            <person name="Pham P.K."/>
            <person name="Cheuk R.F."/>
            <person name="Karlin-Newmann G."/>
            <person name="Liu S.X."/>
            <person name="Lam B."/>
            <person name="Sakano H."/>
            <person name="Wu T."/>
            <person name="Yu G."/>
            <person name="Miranda M."/>
            <person name="Quach H.L."/>
            <person name="Tripp M."/>
            <person name="Chang C.H."/>
            <person name="Lee J.M."/>
            <person name="Toriumi M.J."/>
            <person name="Chan M.M."/>
            <person name="Tang C.C."/>
            <person name="Onodera C.S."/>
            <person name="Deng J.M."/>
            <person name="Akiyama K."/>
            <person name="Ansari Y."/>
            <person name="Arakawa T."/>
            <person name="Banh J."/>
            <person name="Banno F."/>
            <person name="Bowser L."/>
            <person name="Brooks S.Y."/>
            <person name="Carninci P."/>
            <person name="Chao Q."/>
            <person name="Choy N."/>
            <person name="Enju A."/>
            <person name="Goldsmith A.D."/>
            <person name="Gurjal M."/>
            <person name="Hansen N.F."/>
            <person name="Hayashizaki Y."/>
            <person name="Johnson-Hopson C."/>
            <person name="Hsuan V.W."/>
            <person name="Iida K."/>
            <person name="Karnes M."/>
            <person name="Khan S."/>
            <person name="Koesema E."/>
            <person name="Ishida J."/>
            <person name="Jiang P.X."/>
            <person name="Jones T."/>
            <person name="Kawai J."/>
            <person name="Kamiya A."/>
            <person name="Meyers C."/>
            <person name="Nakajima M."/>
            <person name="Narusaka M."/>
            <person name="Seki M."/>
            <person name="Sakurai T."/>
            <person name="Satou M."/>
            <person name="Tamse R."/>
            <person name="Vaysberg M."/>
            <person name="Wallender E.K."/>
            <person name="Wong C."/>
            <person name="Yamamura Y."/>
            <person name="Yuan S."/>
            <person name="Shinozaki K."/>
            <person name="Davis R.W."/>
            <person name="Theologis A."/>
            <person name="Ecker J.R."/>
        </authorList>
    </citation>
    <scope>NUCLEOTIDE SEQUENCE [LARGE SCALE MRNA]</scope>
    <source>
        <strain>cv. Columbia</strain>
    </source>
</reference>
<reference key="5">
    <citation type="journal article" date="2011" name="Plant Cell">
        <title>The plant-specific actin binding protein SCAB1 stabilizes actin filaments and regulates stomatal movement in Arabidopsis.</title>
        <authorList>
            <person name="Zhao Y."/>
            <person name="Zhao S."/>
            <person name="Mao T."/>
            <person name="Qu X."/>
            <person name="Cao W."/>
            <person name="Zhang L."/>
            <person name="Zhang W."/>
            <person name="He L."/>
            <person name="Li S."/>
            <person name="Ren S."/>
            <person name="Zhao J."/>
            <person name="Zhu G."/>
            <person name="Huang S."/>
            <person name="Ye K."/>
            <person name="Yuan M."/>
            <person name="Guo Y."/>
        </authorList>
    </citation>
    <scope>FUNCTION</scope>
    <scope>GENE FAMILY</scope>
    <scope>TISSUE SPECIFICITY</scope>
</reference>